<protein>
    <recommendedName>
        <fullName>Protein hcp1</fullName>
    </recommendedName>
</protein>
<gene>
    <name type="primary">hcp1</name>
    <name type="ordered locus">PA0085</name>
</gene>
<evidence type="ECO:0000269" key="1">
    <source>
    </source>
</evidence>
<evidence type="ECO:0000305" key="2"/>
<evidence type="ECO:0007829" key="3">
    <source>
        <dbReference type="PDB" id="1Y12"/>
    </source>
</evidence>
<comment type="function">
    <text>Required for assembly of the protein secretion apparatus HSI-I. Actively secreted during chronic infection of cystic fibrosis patients.</text>
</comment>
<comment type="subunit">
    <text evidence="1">Hexamer. Three hcp1 monomers form two closely related hexameric rings with a 40 Angstrom internal diameter.</text>
</comment>
<comment type="interaction">
    <interactant intactId="EBI-15689388">
        <id>Q9I747</id>
    </interactant>
    <interactant intactId="EBI-15689388">
        <id>Q9I747</id>
        <label>hcp1</label>
    </interactant>
    <organismsDiffer>false</organismsDiffer>
    <experiments>3</experiments>
</comment>
<comment type="subcellular location">
    <subcellularLocation>
        <location evidence="1">Secreted</location>
    </subcellularLocation>
</comment>
<comment type="induction">
    <text evidence="1">Transcriptionally repressed by RetS and activated by LadS.</text>
</comment>
<comment type="miscellaneous">
    <text>ATP hydrolysis by the first AAA domain of ClpV1 is required for Hcp1 secretion.</text>
</comment>
<comment type="similarity">
    <text evidence="2">Belongs to the hcp1 family.</text>
</comment>
<name>HCP1_PSEAE</name>
<accession>Q9I747</accession>
<proteinExistence type="evidence at protein level"/>
<keyword id="KW-0002">3D-structure</keyword>
<keyword id="KW-1185">Reference proteome</keyword>
<keyword id="KW-0964">Secreted</keyword>
<organism>
    <name type="scientific">Pseudomonas aeruginosa (strain ATCC 15692 / DSM 22644 / CIP 104116 / JCM 14847 / LMG 12228 / 1C / PRS 101 / PAO1)</name>
    <dbReference type="NCBI Taxonomy" id="208964"/>
    <lineage>
        <taxon>Bacteria</taxon>
        <taxon>Pseudomonadati</taxon>
        <taxon>Pseudomonadota</taxon>
        <taxon>Gammaproteobacteria</taxon>
        <taxon>Pseudomonadales</taxon>
        <taxon>Pseudomonadaceae</taxon>
        <taxon>Pseudomonas</taxon>
    </lineage>
</organism>
<dbReference type="EMBL" id="AE004091">
    <property type="protein sequence ID" value="AAG03475.1"/>
    <property type="molecule type" value="Genomic_DNA"/>
</dbReference>
<dbReference type="PIR" id="B83635">
    <property type="entry name" value="B83635"/>
</dbReference>
<dbReference type="RefSeq" id="NP_248775.1">
    <property type="nucleotide sequence ID" value="NC_002516.2"/>
</dbReference>
<dbReference type="PDB" id="1Y12">
    <property type="method" value="X-ray"/>
    <property type="resolution" value="1.95 A"/>
    <property type="chains" value="A/B/C=1-162"/>
</dbReference>
<dbReference type="PDB" id="6AP1">
    <property type="method" value="EM"/>
    <property type="resolution" value="3.20 A"/>
    <property type="chains" value="A/B/C/D/E/F=1-162"/>
</dbReference>
<dbReference type="PDB" id="7O42">
    <property type="method" value="EM"/>
    <property type="resolution" value="4.10 A"/>
    <property type="chains" value="A/B/C/D/E/F=2-162"/>
</dbReference>
<dbReference type="PDBsum" id="1Y12"/>
<dbReference type="PDBsum" id="6AP1"/>
<dbReference type="PDBsum" id="7O42"/>
<dbReference type="EMDB" id="EMD-12716"/>
<dbReference type="EMDB" id="EMD-8887"/>
<dbReference type="SMR" id="Q9I747"/>
<dbReference type="DIP" id="DIP-29826N"/>
<dbReference type="STRING" id="208964.PA0085"/>
<dbReference type="PaxDb" id="208964-PA0085"/>
<dbReference type="DNASU" id="879446"/>
<dbReference type="GeneID" id="879446"/>
<dbReference type="KEGG" id="pae:PA0085"/>
<dbReference type="PATRIC" id="fig|208964.12.peg.89"/>
<dbReference type="PseudoCAP" id="PA0085"/>
<dbReference type="HOGENOM" id="CLU_112762_0_3_6"/>
<dbReference type="InParanoid" id="Q9I747"/>
<dbReference type="OrthoDB" id="4865570at2"/>
<dbReference type="PhylomeDB" id="Q9I747"/>
<dbReference type="BioCyc" id="PAER208964:G1FZ6-87-MONOMER"/>
<dbReference type="EvolutionaryTrace" id="Q9I747"/>
<dbReference type="Proteomes" id="UP000002438">
    <property type="component" value="Chromosome"/>
</dbReference>
<dbReference type="GO" id="GO:0005576">
    <property type="term" value="C:extracellular region"/>
    <property type="evidence" value="ECO:0007669"/>
    <property type="project" value="UniProtKB-SubCell"/>
</dbReference>
<dbReference type="GO" id="GO:0042802">
    <property type="term" value="F:identical protein binding"/>
    <property type="evidence" value="ECO:0000353"/>
    <property type="project" value="IntAct"/>
</dbReference>
<dbReference type="FunFam" id="2.30.110.20:FF:000001">
    <property type="entry name" value="Type VI secretion system effector"/>
    <property type="match status" value="1"/>
</dbReference>
<dbReference type="Gene3D" id="2.30.110.20">
    <property type="entry name" value="Hcp1-like"/>
    <property type="match status" value="1"/>
</dbReference>
<dbReference type="InterPro" id="IPR036624">
    <property type="entry name" value="Hcp1-lik_sf"/>
</dbReference>
<dbReference type="InterPro" id="IPR053165">
    <property type="entry name" value="HSI-I_assembly_Hcp1"/>
</dbReference>
<dbReference type="InterPro" id="IPR008514">
    <property type="entry name" value="T6SS_Hcp"/>
</dbReference>
<dbReference type="NCBIfam" id="TIGR03344">
    <property type="entry name" value="VI_effect_Hcp1"/>
    <property type="match status" value="1"/>
</dbReference>
<dbReference type="PANTHER" id="PTHR36152">
    <property type="entry name" value="CYTOPLASMIC PROTEIN-RELATED"/>
    <property type="match status" value="1"/>
</dbReference>
<dbReference type="PANTHER" id="PTHR36152:SF5">
    <property type="entry name" value="PROTEIN HCP1"/>
    <property type="match status" value="1"/>
</dbReference>
<dbReference type="Pfam" id="PF05638">
    <property type="entry name" value="T6SS_HCP"/>
    <property type="match status" value="1"/>
</dbReference>
<dbReference type="SUPFAM" id="SSF141452">
    <property type="entry name" value="Hcp1-like"/>
    <property type="match status" value="1"/>
</dbReference>
<feature type="chain" id="PRO_0000250698" description="Protein hcp1">
    <location>
        <begin position="1"/>
        <end position="162"/>
    </location>
</feature>
<feature type="strand" evidence="3">
    <location>
        <begin position="4"/>
        <end position="9"/>
    </location>
</feature>
<feature type="strand" evidence="3">
    <location>
        <begin position="19"/>
        <end position="21"/>
    </location>
</feature>
<feature type="strand" evidence="3">
    <location>
        <begin position="24"/>
        <end position="36"/>
    </location>
</feature>
<feature type="strand" evidence="3">
    <location>
        <begin position="51"/>
        <end position="53"/>
    </location>
</feature>
<feature type="strand" evidence="3">
    <location>
        <begin position="56"/>
        <end position="62"/>
    </location>
</feature>
<feature type="helix" evidence="3">
    <location>
        <begin position="66"/>
        <end position="75"/>
    </location>
</feature>
<feature type="strand" evidence="3">
    <location>
        <begin position="79"/>
        <end position="87"/>
    </location>
</feature>
<feature type="strand" evidence="3">
    <location>
        <begin position="98"/>
        <end position="111"/>
    </location>
</feature>
<feature type="strand" evidence="3">
    <location>
        <begin position="122"/>
        <end position="136"/>
    </location>
</feature>
<feature type="strand" evidence="3">
    <location>
        <begin position="150"/>
        <end position="155"/>
    </location>
</feature>
<feature type="turn" evidence="3">
    <location>
        <begin position="156"/>
        <end position="159"/>
    </location>
</feature>
<reference key="1">
    <citation type="journal article" date="2000" name="Nature">
        <title>Complete genome sequence of Pseudomonas aeruginosa PAO1, an opportunistic pathogen.</title>
        <authorList>
            <person name="Stover C.K."/>
            <person name="Pham X.-Q.T."/>
            <person name="Erwin A.L."/>
            <person name="Mizoguchi S.D."/>
            <person name="Warrener P."/>
            <person name="Hickey M.J."/>
            <person name="Brinkman F.S.L."/>
            <person name="Hufnagle W.O."/>
            <person name="Kowalik D.J."/>
            <person name="Lagrou M."/>
            <person name="Garber R.L."/>
            <person name="Goltry L."/>
            <person name="Tolentino E."/>
            <person name="Westbrock-Wadman S."/>
            <person name="Yuan Y."/>
            <person name="Brody L.L."/>
            <person name="Coulter S.N."/>
            <person name="Folger K.R."/>
            <person name="Kas A."/>
            <person name="Larbig K."/>
            <person name="Lim R.M."/>
            <person name="Smith K.A."/>
            <person name="Spencer D.H."/>
            <person name="Wong G.K.-S."/>
            <person name="Wu Z."/>
            <person name="Paulsen I.T."/>
            <person name="Reizer J."/>
            <person name="Saier M.H. Jr."/>
            <person name="Hancock R.E.W."/>
            <person name="Lory S."/>
            <person name="Olson M.V."/>
        </authorList>
    </citation>
    <scope>NUCLEOTIDE SEQUENCE [LARGE SCALE GENOMIC DNA]</scope>
    <source>
        <strain>ATCC 15692 / DSM 22644 / CIP 104116 / JCM 14847 / LMG 12228 / 1C / PRS 101 / PAO1</strain>
    </source>
</reference>
<reference key="2">
    <citation type="journal article" date="2006" name="Science">
        <title>A virulence locus of Pseudomonas aeruginosa encodes a protein secretion apparatus.</title>
        <authorList>
            <person name="Mougous J.D."/>
            <person name="Cuff M.E."/>
            <person name="Raunser S."/>
            <person name="Shen A."/>
            <person name="Zhou M."/>
            <person name="Gifford C.A."/>
            <person name="Goodman A.L."/>
            <person name="Joachimiak G."/>
            <person name="Ordonez C.L."/>
            <person name="Lory S."/>
            <person name="Walz T."/>
            <person name="Joachimiak A."/>
            <person name="Mekalanos J.J."/>
        </authorList>
    </citation>
    <scope>X-RAY CRYSTALLOGRAPHY (1.95 ANGSTROMS)</scope>
    <scope>SUBUNIT</scope>
    <scope>SUBCELLULAR LOCATION</scope>
    <scope>INDUCTION</scope>
    <source>
        <strain>ATCC 15692 / DSM 22644 / CIP 104116 / JCM 14847 / LMG 12228 / 1C / PRS 101 / PAO1</strain>
    </source>
</reference>
<sequence length="162" mass="17415">MAVDMFIKIGDVKGESKDKTHAEEIDVLAWSWGMSQSGSMHMGGGGGAGKVNVQDLSFTKYIDKSTPNLMMACSSGKHYPQAKLTIRKAGGENQVEYLIITLKEVLVSSVSTGGSGGEDRLTENVTLNFAQVQVDYQPQKADGAKDGGPVKYGWNIRQNVQA</sequence>